<feature type="chain" id="PRO_1000119399" description="Phenylalanine--tRNA ligase alpha subunit">
    <location>
        <begin position="1"/>
        <end position="342"/>
    </location>
</feature>
<feature type="binding site" evidence="1">
    <location>
        <position position="260"/>
    </location>
    <ligand>
        <name>Mg(2+)</name>
        <dbReference type="ChEBI" id="CHEBI:18420"/>
        <note>shared with beta subunit</note>
    </ligand>
</feature>
<sequence length="342" mass="37402">MDLSETALAEAVGAARQAFARAGDLDALARLKTEHLGDRAPLALARQALGGVPKDQRADAGKRVNAARAQAQQAYDERLAELRAERDAAVLVAERIDVTLPSTRQPVGARHPITILAEHIADTFIAMGWELAEGPEVEAEQFNFDALNFPADHPARSEQDTFYIAPEGSRQLLRTHTSPVQVRTLLARELPVYVISIGRTFRTDELDATHTPVFHQVEGLAVDRGLSMAHLRGTLDAFARAEFGPQARTRIRPHFFPFTEPSAEVDVWFVGKKGGAGWVEWGGCGMVHPNVLRAAGIDPDVYSGFAFGMGLERTLQFRNGIPDMRDMVEGDMRFSLPFGVGA</sequence>
<protein>
    <recommendedName>
        <fullName evidence="1">Phenylalanine--tRNA ligase alpha subunit</fullName>
        <ecNumber evidence="1">6.1.1.20</ecNumber>
    </recommendedName>
    <alternativeName>
        <fullName evidence="1">Phenylalanyl-tRNA synthetase alpha subunit</fullName>
        <shortName evidence="1">PheRS</shortName>
    </alternativeName>
</protein>
<organism>
    <name type="scientific">Mycobacterium avium (strain 104)</name>
    <dbReference type="NCBI Taxonomy" id="243243"/>
    <lineage>
        <taxon>Bacteria</taxon>
        <taxon>Bacillati</taxon>
        <taxon>Actinomycetota</taxon>
        <taxon>Actinomycetes</taxon>
        <taxon>Mycobacteriales</taxon>
        <taxon>Mycobacteriaceae</taxon>
        <taxon>Mycobacterium</taxon>
        <taxon>Mycobacterium avium complex (MAC)</taxon>
    </lineage>
</organism>
<proteinExistence type="inferred from homology"/>
<gene>
    <name evidence="1" type="primary">pheS</name>
    <name type="ordered locus">MAV_3120</name>
</gene>
<evidence type="ECO:0000255" key="1">
    <source>
        <dbReference type="HAMAP-Rule" id="MF_00281"/>
    </source>
</evidence>
<name>SYFA_MYCA1</name>
<reference key="1">
    <citation type="submission" date="2006-10" db="EMBL/GenBank/DDBJ databases">
        <authorList>
            <person name="Fleischmann R.D."/>
            <person name="Dodson R.J."/>
            <person name="Haft D.H."/>
            <person name="Merkel J.S."/>
            <person name="Nelson W.C."/>
            <person name="Fraser C.M."/>
        </authorList>
    </citation>
    <scope>NUCLEOTIDE SEQUENCE [LARGE SCALE GENOMIC DNA]</scope>
    <source>
        <strain>104</strain>
    </source>
</reference>
<dbReference type="EC" id="6.1.1.20" evidence="1"/>
<dbReference type="EMBL" id="CP000479">
    <property type="protein sequence ID" value="ABK68100.1"/>
    <property type="molecule type" value="Genomic_DNA"/>
</dbReference>
<dbReference type="SMR" id="A0QHB6"/>
<dbReference type="KEGG" id="mav:MAV_3120"/>
<dbReference type="HOGENOM" id="CLU_025086_0_0_11"/>
<dbReference type="Proteomes" id="UP000001574">
    <property type="component" value="Chromosome"/>
</dbReference>
<dbReference type="GO" id="GO:0005737">
    <property type="term" value="C:cytoplasm"/>
    <property type="evidence" value="ECO:0007669"/>
    <property type="project" value="UniProtKB-SubCell"/>
</dbReference>
<dbReference type="GO" id="GO:0005524">
    <property type="term" value="F:ATP binding"/>
    <property type="evidence" value="ECO:0007669"/>
    <property type="project" value="UniProtKB-UniRule"/>
</dbReference>
<dbReference type="GO" id="GO:0000287">
    <property type="term" value="F:magnesium ion binding"/>
    <property type="evidence" value="ECO:0007669"/>
    <property type="project" value="UniProtKB-UniRule"/>
</dbReference>
<dbReference type="GO" id="GO:0004826">
    <property type="term" value="F:phenylalanine-tRNA ligase activity"/>
    <property type="evidence" value="ECO:0007669"/>
    <property type="project" value="UniProtKB-UniRule"/>
</dbReference>
<dbReference type="GO" id="GO:0000049">
    <property type="term" value="F:tRNA binding"/>
    <property type="evidence" value="ECO:0007669"/>
    <property type="project" value="InterPro"/>
</dbReference>
<dbReference type="GO" id="GO:0006432">
    <property type="term" value="P:phenylalanyl-tRNA aminoacylation"/>
    <property type="evidence" value="ECO:0007669"/>
    <property type="project" value="UniProtKB-UniRule"/>
</dbReference>
<dbReference type="CDD" id="cd00496">
    <property type="entry name" value="PheRS_alpha_core"/>
    <property type="match status" value="1"/>
</dbReference>
<dbReference type="FunFam" id="3.30.930.10:FF:000003">
    <property type="entry name" value="Phenylalanine--tRNA ligase alpha subunit"/>
    <property type="match status" value="1"/>
</dbReference>
<dbReference type="Gene3D" id="3.30.930.10">
    <property type="entry name" value="Bira Bifunctional Protein, Domain 2"/>
    <property type="match status" value="1"/>
</dbReference>
<dbReference type="HAMAP" id="MF_00281">
    <property type="entry name" value="Phe_tRNA_synth_alpha1"/>
    <property type="match status" value="1"/>
</dbReference>
<dbReference type="InterPro" id="IPR006195">
    <property type="entry name" value="aa-tRNA-synth_II"/>
</dbReference>
<dbReference type="InterPro" id="IPR045864">
    <property type="entry name" value="aa-tRNA-synth_II/BPL/LPL"/>
</dbReference>
<dbReference type="InterPro" id="IPR004529">
    <property type="entry name" value="Phe-tRNA-synth_IIc_asu"/>
</dbReference>
<dbReference type="InterPro" id="IPR004188">
    <property type="entry name" value="Phe-tRNA_ligase_II_N"/>
</dbReference>
<dbReference type="InterPro" id="IPR022911">
    <property type="entry name" value="Phe_tRNA_ligase_alpha1_bac"/>
</dbReference>
<dbReference type="InterPro" id="IPR002319">
    <property type="entry name" value="Phenylalanyl-tRNA_Synthase"/>
</dbReference>
<dbReference type="InterPro" id="IPR010978">
    <property type="entry name" value="tRNA-bd_arm"/>
</dbReference>
<dbReference type="NCBIfam" id="TIGR00468">
    <property type="entry name" value="pheS"/>
    <property type="match status" value="1"/>
</dbReference>
<dbReference type="PANTHER" id="PTHR11538:SF41">
    <property type="entry name" value="PHENYLALANINE--TRNA LIGASE, MITOCHONDRIAL"/>
    <property type="match status" value="1"/>
</dbReference>
<dbReference type="PANTHER" id="PTHR11538">
    <property type="entry name" value="PHENYLALANYL-TRNA SYNTHETASE"/>
    <property type="match status" value="1"/>
</dbReference>
<dbReference type="Pfam" id="PF02912">
    <property type="entry name" value="Phe_tRNA-synt_N"/>
    <property type="match status" value="1"/>
</dbReference>
<dbReference type="Pfam" id="PF01409">
    <property type="entry name" value="tRNA-synt_2d"/>
    <property type="match status" value="1"/>
</dbReference>
<dbReference type="SUPFAM" id="SSF55681">
    <property type="entry name" value="Class II aaRS and biotin synthetases"/>
    <property type="match status" value="1"/>
</dbReference>
<dbReference type="SUPFAM" id="SSF46589">
    <property type="entry name" value="tRNA-binding arm"/>
    <property type="match status" value="1"/>
</dbReference>
<dbReference type="PROSITE" id="PS50862">
    <property type="entry name" value="AA_TRNA_LIGASE_II"/>
    <property type="match status" value="1"/>
</dbReference>
<comment type="catalytic activity">
    <reaction evidence="1">
        <text>tRNA(Phe) + L-phenylalanine + ATP = L-phenylalanyl-tRNA(Phe) + AMP + diphosphate + H(+)</text>
        <dbReference type="Rhea" id="RHEA:19413"/>
        <dbReference type="Rhea" id="RHEA-COMP:9668"/>
        <dbReference type="Rhea" id="RHEA-COMP:9699"/>
        <dbReference type="ChEBI" id="CHEBI:15378"/>
        <dbReference type="ChEBI" id="CHEBI:30616"/>
        <dbReference type="ChEBI" id="CHEBI:33019"/>
        <dbReference type="ChEBI" id="CHEBI:58095"/>
        <dbReference type="ChEBI" id="CHEBI:78442"/>
        <dbReference type="ChEBI" id="CHEBI:78531"/>
        <dbReference type="ChEBI" id="CHEBI:456215"/>
        <dbReference type="EC" id="6.1.1.20"/>
    </reaction>
</comment>
<comment type="cofactor">
    <cofactor evidence="1">
        <name>Mg(2+)</name>
        <dbReference type="ChEBI" id="CHEBI:18420"/>
    </cofactor>
    <text evidence="1">Binds 2 magnesium ions per tetramer.</text>
</comment>
<comment type="subunit">
    <text evidence="1">Tetramer of two alpha and two beta subunits.</text>
</comment>
<comment type="subcellular location">
    <subcellularLocation>
        <location evidence="1">Cytoplasm</location>
    </subcellularLocation>
</comment>
<comment type="similarity">
    <text evidence="1">Belongs to the class-II aminoacyl-tRNA synthetase family. Phe-tRNA synthetase alpha subunit type 1 subfamily.</text>
</comment>
<keyword id="KW-0030">Aminoacyl-tRNA synthetase</keyword>
<keyword id="KW-0067">ATP-binding</keyword>
<keyword id="KW-0963">Cytoplasm</keyword>
<keyword id="KW-0436">Ligase</keyword>
<keyword id="KW-0460">Magnesium</keyword>
<keyword id="KW-0479">Metal-binding</keyword>
<keyword id="KW-0547">Nucleotide-binding</keyword>
<keyword id="KW-0648">Protein biosynthesis</keyword>
<accession>A0QHB6</accession>